<comment type="interaction">
    <interactant intactId="EBI-15192317">
        <id>Q9LJ44</id>
    </interactant>
    <interactant intactId="EBI-15191571">
        <id>Q4PSE2</id>
        <label>NFYC8</label>
    </interactant>
    <organismsDiffer>false</organismsDiffer>
    <experiments>4</experiments>
</comment>
<comment type="subcellular location">
    <subcellularLocation>
        <location evidence="2">Nucleus</location>
    </subcellularLocation>
</comment>
<comment type="similarity">
    <text evidence="3">Belongs to the CONSTANS family.</text>
</comment>
<comment type="sequence caution" evidence="3">
    <conflict type="erroneous gene model prediction">
        <sequence resource="EMBL-CDS" id="BAB02188"/>
    </conflict>
</comment>
<feature type="chain" id="PRO_0000113289" description="Zinc finger protein CONSTANS-LIKE 12">
    <location>
        <begin position="1"/>
        <end position="364"/>
    </location>
</feature>
<feature type="domain" description="CCT" evidence="2">
    <location>
        <begin position="280"/>
        <end position="322"/>
    </location>
</feature>
<feature type="zinc finger region" description="B box-type 1; atypical" evidence="1">
    <location>
        <begin position="5"/>
        <end position="47"/>
    </location>
</feature>
<feature type="zinc finger region" description="B box-type 2; degenerate" evidence="1">
    <location>
        <begin position="48"/>
        <end position="88"/>
    </location>
</feature>
<feature type="binding site" evidence="1">
    <location>
        <position position="5"/>
    </location>
    <ligand>
        <name>Zn(2+)</name>
        <dbReference type="ChEBI" id="CHEBI:29105"/>
    </ligand>
</feature>
<feature type="binding site" evidence="1">
    <location>
        <position position="8"/>
    </location>
    <ligand>
        <name>Zn(2+)</name>
        <dbReference type="ChEBI" id="CHEBI:29105"/>
    </ligand>
</feature>
<feature type="binding site" evidence="1">
    <location>
        <position position="28"/>
    </location>
    <ligand>
        <name>Zn(2+)</name>
        <dbReference type="ChEBI" id="CHEBI:29105"/>
    </ligand>
</feature>
<feature type="binding site" evidence="1">
    <location>
        <position position="33"/>
    </location>
    <ligand>
        <name>Zn(2+)</name>
        <dbReference type="ChEBI" id="CHEBI:29105"/>
    </ligand>
</feature>
<dbReference type="EMBL" id="AP000739">
    <property type="protein sequence ID" value="BAB02188.1"/>
    <property type="status" value="ALT_SEQ"/>
    <property type="molecule type" value="Genomic_DNA"/>
</dbReference>
<dbReference type="EMBL" id="CP002686">
    <property type="protein sequence ID" value="AEE76562.1"/>
    <property type="molecule type" value="Genomic_DNA"/>
</dbReference>
<dbReference type="EMBL" id="AB493626">
    <property type="protein sequence ID" value="BAH30464.1"/>
    <property type="molecule type" value="mRNA"/>
</dbReference>
<dbReference type="SMR" id="Q9LJ44"/>
<dbReference type="BioGRID" id="7075">
    <property type="interactions" value="7"/>
</dbReference>
<dbReference type="IntAct" id="Q9LJ44">
    <property type="interactions" value="7"/>
</dbReference>
<dbReference type="STRING" id="3702.Q9LJ44"/>
<dbReference type="PaxDb" id="3702-AT3G21880.1"/>
<dbReference type="EnsemblPlants" id="AT3G21880.1">
    <property type="protein sequence ID" value="AT3G21880.1"/>
    <property type="gene ID" value="AT3G21880"/>
</dbReference>
<dbReference type="Gramene" id="AT3G21880.1">
    <property type="protein sequence ID" value="AT3G21880.1"/>
    <property type="gene ID" value="AT3G21880"/>
</dbReference>
<dbReference type="KEGG" id="ath:AT3G21880"/>
<dbReference type="Araport" id="AT3G21880"/>
<dbReference type="TAIR" id="AT3G21880">
    <property type="gene designation" value="BBX10"/>
</dbReference>
<dbReference type="eggNOG" id="ENOG502QSHH">
    <property type="taxonomic scope" value="Eukaryota"/>
</dbReference>
<dbReference type="HOGENOM" id="CLU_028225_0_1_1"/>
<dbReference type="InParanoid" id="Q9LJ44"/>
<dbReference type="OMA" id="GHQDCKS"/>
<dbReference type="OrthoDB" id="153872at2759"/>
<dbReference type="PhylomeDB" id="Q9LJ44"/>
<dbReference type="PRO" id="PR:Q9LJ44"/>
<dbReference type="Proteomes" id="UP000006548">
    <property type="component" value="Chromosome 3"/>
</dbReference>
<dbReference type="ExpressionAtlas" id="Q9LJ44">
    <property type="expression patterns" value="baseline and differential"/>
</dbReference>
<dbReference type="GO" id="GO:0005634">
    <property type="term" value="C:nucleus"/>
    <property type="evidence" value="ECO:0000314"/>
    <property type="project" value="TAIR"/>
</dbReference>
<dbReference type="GO" id="GO:0003700">
    <property type="term" value="F:DNA-binding transcription factor activity"/>
    <property type="evidence" value="ECO:0000250"/>
    <property type="project" value="TAIR"/>
</dbReference>
<dbReference type="GO" id="GO:0000976">
    <property type="term" value="F:transcription cis-regulatory region binding"/>
    <property type="evidence" value="ECO:0000353"/>
    <property type="project" value="TAIR"/>
</dbReference>
<dbReference type="GO" id="GO:0008270">
    <property type="term" value="F:zinc ion binding"/>
    <property type="evidence" value="ECO:0007669"/>
    <property type="project" value="UniProtKB-KW"/>
</dbReference>
<dbReference type="GO" id="GO:0010629">
    <property type="term" value="P:negative regulation of gene expression"/>
    <property type="evidence" value="ECO:0000315"/>
    <property type="project" value="TAIR"/>
</dbReference>
<dbReference type="GO" id="GO:0048579">
    <property type="term" value="P:negative regulation of long-day photoperiodism, flowering"/>
    <property type="evidence" value="ECO:0000315"/>
    <property type="project" value="TAIR"/>
</dbReference>
<dbReference type="GO" id="GO:0006355">
    <property type="term" value="P:regulation of DNA-templated transcription"/>
    <property type="evidence" value="ECO:0000304"/>
    <property type="project" value="TAIR"/>
</dbReference>
<dbReference type="GO" id="GO:2000032">
    <property type="term" value="P:regulation of secondary shoot formation"/>
    <property type="evidence" value="ECO:0000315"/>
    <property type="project" value="TAIR"/>
</dbReference>
<dbReference type="CDD" id="cd19821">
    <property type="entry name" value="Bbox1_BBX-like"/>
    <property type="match status" value="1"/>
</dbReference>
<dbReference type="InterPro" id="IPR010402">
    <property type="entry name" value="CCT_domain"/>
</dbReference>
<dbReference type="InterPro" id="IPR049808">
    <property type="entry name" value="CONSTANS-like_Bbox1"/>
</dbReference>
<dbReference type="InterPro" id="IPR000315">
    <property type="entry name" value="Znf_B-box"/>
</dbReference>
<dbReference type="PANTHER" id="PTHR31717:SF46">
    <property type="entry name" value="CCT MOTIF FAMILY PROTEIN-RELATED"/>
    <property type="match status" value="1"/>
</dbReference>
<dbReference type="PANTHER" id="PTHR31717">
    <property type="entry name" value="ZINC FINGER PROTEIN CONSTANS-LIKE 10"/>
    <property type="match status" value="1"/>
</dbReference>
<dbReference type="Pfam" id="PF06203">
    <property type="entry name" value="CCT"/>
    <property type="match status" value="1"/>
</dbReference>
<dbReference type="SMART" id="SM00336">
    <property type="entry name" value="BBOX"/>
    <property type="match status" value="1"/>
</dbReference>
<dbReference type="PROSITE" id="PS51017">
    <property type="entry name" value="CCT"/>
    <property type="match status" value="1"/>
</dbReference>
<dbReference type="PROSITE" id="PS50119">
    <property type="entry name" value="ZF_BBOX"/>
    <property type="match status" value="1"/>
</dbReference>
<proteinExistence type="evidence at protein level"/>
<name>COL12_ARATH</name>
<keyword id="KW-0479">Metal-binding</keyword>
<keyword id="KW-0539">Nucleus</keyword>
<keyword id="KW-1185">Reference proteome</keyword>
<keyword id="KW-0677">Repeat</keyword>
<keyword id="KW-0862">Zinc</keyword>
<keyword id="KW-0863">Zinc-finger</keyword>
<accession>Q9LJ44</accession>
<accession>C0SVC3</accession>
<protein>
    <recommendedName>
        <fullName>Zinc finger protein CONSTANS-LIKE 12</fullName>
    </recommendedName>
</protein>
<sequence length="364" mass="40470">MEPKCDHCATSQALIYCKSDLAKLCLNCDVHVHSANPLSHRHIRSLICEKCFSQPAAIRCLDEKVSYCQGCHWHESNCSELGHRVQSLNPFSGCPSPTDFNRMWSSILEPPVSGLLSPFVGSFPLNDLNNTMFDTAYSMVPHNISYTQNFSDNLSFFSTESKGYPDMVLKLEEGEEDLCEGLNLDDAPLNFDVGDDIIGCSSEVHIEPDHTVPNCLLIDKTNTSSFTGSNFTVDKALEASPPGQQMNINTGLQLPLSPVLFGQIHPSLNITGENNAADYQDCGMSPGFIMSEAPWETNFEVSCPQARNEAKLRYKEKKLKRSFGKQIRYASRKARADTRKRVKGRFVKAGDSYDYDPSSPTTNN</sequence>
<gene>
    <name type="primary">COL12</name>
    <name type="ordered locus">At3g21880</name>
    <name type="ORF">MEK6.3</name>
    <name type="ORF">MEK6_2</name>
</gene>
<organism>
    <name type="scientific">Arabidopsis thaliana</name>
    <name type="common">Mouse-ear cress</name>
    <dbReference type="NCBI Taxonomy" id="3702"/>
    <lineage>
        <taxon>Eukaryota</taxon>
        <taxon>Viridiplantae</taxon>
        <taxon>Streptophyta</taxon>
        <taxon>Embryophyta</taxon>
        <taxon>Tracheophyta</taxon>
        <taxon>Spermatophyta</taxon>
        <taxon>Magnoliopsida</taxon>
        <taxon>eudicotyledons</taxon>
        <taxon>Gunneridae</taxon>
        <taxon>Pentapetalae</taxon>
        <taxon>rosids</taxon>
        <taxon>malvids</taxon>
        <taxon>Brassicales</taxon>
        <taxon>Brassicaceae</taxon>
        <taxon>Camelineae</taxon>
        <taxon>Arabidopsis</taxon>
    </lineage>
</organism>
<evidence type="ECO:0000255" key="1">
    <source>
        <dbReference type="PROSITE-ProRule" id="PRU00024"/>
    </source>
</evidence>
<evidence type="ECO:0000255" key="2">
    <source>
        <dbReference type="PROSITE-ProRule" id="PRU00357"/>
    </source>
</evidence>
<evidence type="ECO:0000305" key="3"/>
<reference key="1">
    <citation type="journal article" date="2000" name="DNA Res.">
        <title>Structural analysis of Arabidopsis thaliana chromosome 3. II. Sequence features of the 4,251,695 bp regions covered by 90 P1, TAC and BAC clones.</title>
        <authorList>
            <person name="Kaneko T."/>
            <person name="Katoh T."/>
            <person name="Sato S."/>
            <person name="Nakamura Y."/>
            <person name="Asamizu E."/>
            <person name="Tabata S."/>
        </authorList>
    </citation>
    <scope>NUCLEOTIDE SEQUENCE [LARGE SCALE GENOMIC DNA]</scope>
    <source>
        <strain>cv. Columbia</strain>
    </source>
</reference>
<reference key="2">
    <citation type="journal article" date="2017" name="Plant J.">
        <title>Araport11: a complete reannotation of the Arabidopsis thaliana reference genome.</title>
        <authorList>
            <person name="Cheng C.Y."/>
            <person name="Krishnakumar V."/>
            <person name="Chan A.P."/>
            <person name="Thibaud-Nissen F."/>
            <person name="Schobel S."/>
            <person name="Town C.D."/>
        </authorList>
    </citation>
    <scope>GENOME REANNOTATION</scope>
    <source>
        <strain>cv. Columbia</strain>
    </source>
</reference>
<reference key="3">
    <citation type="submission" date="2009-03" db="EMBL/GenBank/DDBJ databases">
        <title>ORF cloning and analysis of Arabidopsis transcription factor genes.</title>
        <authorList>
            <person name="Fujita M."/>
            <person name="Mizukado S."/>
            <person name="Seki M."/>
            <person name="Shinozaki K."/>
            <person name="Mitsuda N."/>
            <person name="Takiguchi Y."/>
            <person name="Takagi M."/>
        </authorList>
    </citation>
    <scope>NUCLEOTIDE SEQUENCE [LARGE SCALE MRNA]</scope>
</reference>
<reference key="4">
    <citation type="journal article" date="2003" name="Plant Physiol.">
        <title>The evolution of CONSTANS-like gene families in barley, rice, and Arabidopsis.</title>
        <authorList>
            <person name="Griffiths S."/>
            <person name="Dunford R.P."/>
            <person name="Coupland G."/>
            <person name="Laurie D.A."/>
        </authorList>
    </citation>
    <scope>GENE FAMILY</scope>
    <scope>NOMENCLATURE</scope>
</reference>